<proteinExistence type="inferred from homology"/>
<feature type="chain" id="PRO_0000137858" description="Argininosuccinate lyase">
    <location>
        <begin position="1"/>
        <end position="483"/>
    </location>
</feature>
<comment type="catalytic activity">
    <reaction evidence="1">
        <text>2-(N(omega)-L-arginino)succinate = fumarate + L-arginine</text>
        <dbReference type="Rhea" id="RHEA:24020"/>
        <dbReference type="ChEBI" id="CHEBI:29806"/>
        <dbReference type="ChEBI" id="CHEBI:32682"/>
        <dbReference type="ChEBI" id="CHEBI:57472"/>
        <dbReference type="EC" id="4.3.2.1"/>
    </reaction>
</comment>
<comment type="pathway">
    <text evidence="1">Amino-acid biosynthesis; L-arginine biosynthesis; L-arginine from L-ornithine and carbamoyl phosphate: step 3/3.</text>
</comment>
<comment type="subcellular location">
    <subcellularLocation>
        <location evidence="1">Cytoplasm</location>
    </subcellularLocation>
</comment>
<comment type="similarity">
    <text evidence="1">Belongs to the lyase 1 family. Argininosuccinate lyase subfamily.</text>
</comment>
<reference key="1">
    <citation type="journal article" date="1997" name="Nature">
        <title>The complete genome sequence of the hyperthermophilic, sulphate-reducing archaeon Archaeoglobus fulgidus.</title>
        <authorList>
            <person name="Klenk H.-P."/>
            <person name="Clayton R.A."/>
            <person name="Tomb J.-F."/>
            <person name="White O."/>
            <person name="Nelson K.E."/>
            <person name="Ketchum K.A."/>
            <person name="Dodson R.J."/>
            <person name="Gwinn M.L."/>
            <person name="Hickey E.K."/>
            <person name="Peterson J.D."/>
            <person name="Richardson D.L."/>
            <person name="Kerlavage A.R."/>
            <person name="Graham D.E."/>
            <person name="Kyrpides N.C."/>
            <person name="Fleischmann R.D."/>
            <person name="Quackenbush J."/>
            <person name="Lee N.H."/>
            <person name="Sutton G.G."/>
            <person name="Gill S.R."/>
            <person name="Kirkness E.F."/>
            <person name="Dougherty B.A."/>
            <person name="McKenney K."/>
            <person name="Adams M.D."/>
            <person name="Loftus B.J."/>
            <person name="Peterson S.N."/>
            <person name="Reich C.I."/>
            <person name="McNeil L.K."/>
            <person name="Badger J.H."/>
            <person name="Glodek A."/>
            <person name="Zhou L."/>
            <person name="Overbeek R."/>
            <person name="Gocayne J.D."/>
            <person name="Weidman J.F."/>
            <person name="McDonald L.A."/>
            <person name="Utterback T.R."/>
            <person name="Cotton M.D."/>
            <person name="Spriggs T."/>
            <person name="Artiach P."/>
            <person name="Kaine B.P."/>
            <person name="Sykes S.M."/>
            <person name="Sadow P.W."/>
            <person name="D'Andrea K.P."/>
            <person name="Bowman C."/>
            <person name="Fujii C."/>
            <person name="Garland S.A."/>
            <person name="Mason T.M."/>
            <person name="Olsen G.J."/>
            <person name="Fraser C.M."/>
            <person name="Smith H.O."/>
            <person name="Woese C.R."/>
            <person name="Venter J.C."/>
        </authorList>
    </citation>
    <scope>NUCLEOTIDE SEQUENCE [LARGE SCALE GENOMIC DNA]</scope>
    <source>
        <strain>ATCC 49558 / DSM 4304 / JCM 9628 / NBRC 100126 / VC-16</strain>
    </source>
</reference>
<accession>O29379</accession>
<dbReference type="EC" id="4.3.2.1" evidence="1"/>
<dbReference type="EMBL" id="AE000782">
    <property type="protein sequence ID" value="AAB90359.1"/>
    <property type="molecule type" value="Genomic_DNA"/>
</dbReference>
<dbReference type="PIR" id="C69360">
    <property type="entry name" value="C69360"/>
</dbReference>
<dbReference type="RefSeq" id="WP_010878383.1">
    <property type="nucleotide sequence ID" value="NC_000917.1"/>
</dbReference>
<dbReference type="SMR" id="O29379"/>
<dbReference type="STRING" id="224325.AF_0883"/>
<dbReference type="PaxDb" id="224325-AF_0883"/>
<dbReference type="EnsemblBacteria" id="AAB90359">
    <property type="protein sequence ID" value="AAB90359"/>
    <property type="gene ID" value="AF_0883"/>
</dbReference>
<dbReference type="GeneID" id="24794484"/>
<dbReference type="KEGG" id="afu:AF_0883"/>
<dbReference type="eggNOG" id="arCOG01748">
    <property type="taxonomic scope" value="Archaea"/>
</dbReference>
<dbReference type="HOGENOM" id="CLU_027272_2_3_2"/>
<dbReference type="OrthoDB" id="27337at2157"/>
<dbReference type="PhylomeDB" id="O29379"/>
<dbReference type="UniPathway" id="UPA00068">
    <property type="reaction ID" value="UER00114"/>
</dbReference>
<dbReference type="Proteomes" id="UP000002199">
    <property type="component" value="Chromosome"/>
</dbReference>
<dbReference type="GO" id="GO:0005829">
    <property type="term" value="C:cytosol"/>
    <property type="evidence" value="ECO:0007669"/>
    <property type="project" value="TreeGrafter"/>
</dbReference>
<dbReference type="GO" id="GO:0004056">
    <property type="term" value="F:argininosuccinate lyase activity"/>
    <property type="evidence" value="ECO:0007669"/>
    <property type="project" value="UniProtKB-UniRule"/>
</dbReference>
<dbReference type="GO" id="GO:0042450">
    <property type="term" value="P:arginine biosynthetic process via ornithine"/>
    <property type="evidence" value="ECO:0007669"/>
    <property type="project" value="InterPro"/>
</dbReference>
<dbReference type="GO" id="GO:0006526">
    <property type="term" value="P:L-arginine biosynthetic process"/>
    <property type="evidence" value="ECO:0007669"/>
    <property type="project" value="UniProtKB-UniRule"/>
</dbReference>
<dbReference type="CDD" id="cd01359">
    <property type="entry name" value="Argininosuccinate_lyase"/>
    <property type="match status" value="1"/>
</dbReference>
<dbReference type="Gene3D" id="1.10.40.30">
    <property type="entry name" value="Fumarase/aspartase (C-terminal domain)"/>
    <property type="match status" value="1"/>
</dbReference>
<dbReference type="Gene3D" id="1.20.200.10">
    <property type="entry name" value="Fumarase/aspartase (Central domain)"/>
    <property type="match status" value="1"/>
</dbReference>
<dbReference type="Gene3D" id="1.10.275.10">
    <property type="entry name" value="Fumarase/aspartase (N-terminal domain)"/>
    <property type="match status" value="1"/>
</dbReference>
<dbReference type="HAMAP" id="MF_00006">
    <property type="entry name" value="Arg_succ_lyase"/>
    <property type="match status" value="1"/>
</dbReference>
<dbReference type="InterPro" id="IPR029419">
    <property type="entry name" value="Arg_succ_lyase_C"/>
</dbReference>
<dbReference type="InterPro" id="IPR009049">
    <property type="entry name" value="Argininosuccinate_lyase"/>
</dbReference>
<dbReference type="InterPro" id="IPR024083">
    <property type="entry name" value="Fumarase/histidase_N"/>
</dbReference>
<dbReference type="InterPro" id="IPR000362">
    <property type="entry name" value="Fumarate_lyase_fam"/>
</dbReference>
<dbReference type="InterPro" id="IPR022761">
    <property type="entry name" value="Fumarate_lyase_N"/>
</dbReference>
<dbReference type="InterPro" id="IPR008948">
    <property type="entry name" value="L-Aspartase-like"/>
</dbReference>
<dbReference type="NCBIfam" id="TIGR00838">
    <property type="entry name" value="argH"/>
    <property type="match status" value="1"/>
</dbReference>
<dbReference type="PANTHER" id="PTHR43814">
    <property type="entry name" value="ARGININOSUCCINATE LYASE"/>
    <property type="match status" value="1"/>
</dbReference>
<dbReference type="PANTHER" id="PTHR43814:SF1">
    <property type="entry name" value="ARGININOSUCCINATE LYASE"/>
    <property type="match status" value="1"/>
</dbReference>
<dbReference type="Pfam" id="PF14698">
    <property type="entry name" value="ASL_C2"/>
    <property type="match status" value="1"/>
</dbReference>
<dbReference type="Pfam" id="PF00206">
    <property type="entry name" value="Lyase_1"/>
    <property type="match status" value="1"/>
</dbReference>
<dbReference type="PRINTS" id="PR00145">
    <property type="entry name" value="ARGSUCLYASE"/>
</dbReference>
<dbReference type="PRINTS" id="PR00149">
    <property type="entry name" value="FUMRATELYASE"/>
</dbReference>
<dbReference type="SUPFAM" id="SSF48557">
    <property type="entry name" value="L-aspartase-like"/>
    <property type="match status" value="1"/>
</dbReference>
<gene>
    <name evidence="1" type="primary">argH</name>
    <name type="ordered locus">AF_0883</name>
</gene>
<protein>
    <recommendedName>
        <fullName evidence="1">Argininosuccinate lyase</fullName>
        <shortName evidence="1">ASAL</shortName>
        <ecNumber evidence="1">4.3.2.1</ecNumber>
    </recommendedName>
    <alternativeName>
        <fullName evidence="1">Arginosuccinase</fullName>
    </alternativeName>
</protein>
<evidence type="ECO:0000255" key="1">
    <source>
        <dbReference type="HAMAP-Rule" id="MF_00006"/>
    </source>
</evidence>
<sequence>MLRESRMKKGMDPKALKLSSSIEHDKNIFLYDILVDVAHVLTLKKGGYLSEEEAKEIILALKKVKDSGFREDWPYEDVHEAIEAEVTKITPHGAKMHTGRSRNDEVATCLRMFARDHLLNLAEAILNALDVLIKKAEKSHFLMPGFTHLQYAQPTRLSHHLLAYHDMLSRDFERAIEAFRRVNKSPLGSAAFASTGYSLDRVYAARLLGFDGVVEHSEDAVASRDFVIESIFVAAEAMLSISRIAEEIVLFSSEFGFITLPDEFSSTSSIMPQKKNPDIAELLRANAGKIAGNLTSAMMIYKATPFSYNRDFQEMNPLLYESLKRTHLAVEVFASMMGKIKFNPEITERKASKGFATATELADMLVMKYGVPFRMAHRIVGRLAAKELERPTASDVNSAAKELGVEINVRDEDVLEALDVEKVVENRGNLGGTSKAEVERMIKARKSDLKDRKTLLRKLRGEVKMGLKMLYDEAKKLGVDINV</sequence>
<name>ARLY_ARCFU</name>
<organism>
    <name type="scientific">Archaeoglobus fulgidus (strain ATCC 49558 / DSM 4304 / JCM 9628 / NBRC 100126 / VC-16)</name>
    <dbReference type="NCBI Taxonomy" id="224325"/>
    <lineage>
        <taxon>Archaea</taxon>
        <taxon>Methanobacteriati</taxon>
        <taxon>Methanobacteriota</taxon>
        <taxon>Archaeoglobi</taxon>
        <taxon>Archaeoglobales</taxon>
        <taxon>Archaeoglobaceae</taxon>
        <taxon>Archaeoglobus</taxon>
    </lineage>
</organism>
<keyword id="KW-0028">Amino-acid biosynthesis</keyword>
<keyword id="KW-0055">Arginine biosynthesis</keyword>
<keyword id="KW-0963">Cytoplasm</keyword>
<keyword id="KW-0456">Lyase</keyword>
<keyword id="KW-1185">Reference proteome</keyword>